<reference key="1">
    <citation type="submission" date="2006-06" db="EMBL/GenBank/DDBJ databases">
        <title>Complete sequence of chromosome of Mesorhizobium sp. BNC1.</title>
        <authorList>
            <consortium name="US DOE Joint Genome Institute"/>
            <person name="Copeland A."/>
            <person name="Lucas S."/>
            <person name="Lapidus A."/>
            <person name="Barry K."/>
            <person name="Detter J.C."/>
            <person name="Glavina del Rio T."/>
            <person name="Hammon N."/>
            <person name="Israni S."/>
            <person name="Dalin E."/>
            <person name="Tice H."/>
            <person name="Pitluck S."/>
            <person name="Chertkov O."/>
            <person name="Brettin T."/>
            <person name="Bruce D."/>
            <person name="Han C."/>
            <person name="Tapia R."/>
            <person name="Gilna P."/>
            <person name="Schmutz J."/>
            <person name="Larimer F."/>
            <person name="Land M."/>
            <person name="Hauser L."/>
            <person name="Kyrpides N."/>
            <person name="Mikhailova N."/>
            <person name="Richardson P."/>
        </authorList>
    </citation>
    <scope>NUCLEOTIDE SEQUENCE [LARGE SCALE GENOMIC DNA]</scope>
    <source>
        <strain>BNC1</strain>
    </source>
</reference>
<protein>
    <recommendedName>
        <fullName evidence="1">Probable flagellum biosynthesis repressor protein FlbT</fullName>
    </recommendedName>
</protein>
<organism>
    <name type="scientific">Chelativorans sp. (strain BNC1)</name>
    <dbReference type="NCBI Taxonomy" id="266779"/>
    <lineage>
        <taxon>Bacteria</taxon>
        <taxon>Pseudomonadati</taxon>
        <taxon>Pseudomonadota</taxon>
        <taxon>Alphaproteobacteria</taxon>
        <taxon>Hyphomicrobiales</taxon>
        <taxon>Phyllobacteriaceae</taxon>
        <taxon>Chelativorans</taxon>
    </lineage>
</organism>
<keyword id="KW-1005">Bacterial flagellum biogenesis</keyword>
<keyword id="KW-0678">Repressor</keyword>
<keyword id="KW-0694">RNA-binding</keyword>
<name>FLBT_CHESB</name>
<feature type="chain" id="PRO_1000046831" description="Probable flagellum biosynthesis repressor protein FlbT">
    <location>
        <begin position="1"/>
        <end position="145"/>
    </location>
</feature>
<gene>
    <name evidence="1" type="primary">flbT</name>
    <name type="ordered locus">Meso_0275</name>
</gene>
<sequence length="145" mass="16412">MKNTFRISLKAGEKIYVNGAVIKVDRKVSLEFLNDVQFLLQQHVLQPEDANTPLRQLYFIVQVMLMGPEGADKTRPLLKDMLDNLLATFRNERILAGLKHVDSLVCEGQIYEALKAIRALYPIEEEILSAGRQQEQAIFAKAVGE</sequence>
<evidence type="ECO:0000255" key="1">
    <source>
        <dbReference type="HAMAP-Rule" id="MF_00783"/>
    </source>
</evidence>
<accession>Q11LP6</accession>
<dbReference type="EMBL" id="CP000390">
    <property type="protein sequence ID" value="ABG61679.1"/>
    <property type="molecule type" value="Genomic_DNA"/>
</dbReference>
<dbReference type="STRING" id="266779.Meso_0275"/>
<dbReference type="KEGG" id="mes:Meso_0275"/>
<dbReference type="eggNOG" id="COG5443">
    <property type="taxonomic scope" value="Bacteria"/>
</dbReference>
<dbReference type="HOGENOM" id="CLU_130913_1_0_5"/>
<dbReference type="OrthoDB" id="7932924at2"/>
<dbReference type="GO" id="GO:0048027">
    <property type="term" value="F:mRNA 5'-UTR binding"/>
    <property type="evidence" value="ECO:0007669"/>
    <property type="project" value="UniProtKB-UniRule"/>
</dbReference>
<dbReference type="GO" id="GO:0044781">
    <property type="term" value="P:bacterial-type flagellum organization"/>
    <property type="evidence" value="ECO:0007669"/>
    <property type="project" value="UniProtKB-KW"/>
</dbReference>
<dbReference type="GO" id="GO:0006402">
    <property type="term" value="P:mRNA catabolic process"/>
    <property type="evidence" value="ECO:0007669"/>
    <property type="project" value="InterPro"/>
</dbReference>
<dbReference type="GO" id="GO:1902209">
    <property type="term" value="P:negative regulation of bacterial-type flagellum assembly"/>
    <property type="evidence" value="ECO:0007669"/>
    <property type="project" value="UniProtKB-UniRule"/>
</dbReference>
<dbReference type="HAMAP" id="MF_00783">
    <property type="entry name" value="FlbT"/>
    <property type="match status" value="1"/>
</dbReference>
<dbReference type="InterPro" id="IPR009967">
    <property type="entry name" value="Flagellum_FlbT"/>
</dbReference>
<dbReference type="NCBIfam" id="NF001995">
    <property type="entry name" value="PRK00794.1-1"/>
    <property type="match status" value="1"/>
</dbReference>
<dbReference type="Pfam" id="PF07378">
    <property type="entry name" value="FlbT"/>
    <property type="match status" value="1"/>
</dbReference>
<dbReference type="PIRSF" id="PIRSF009533">
    <property type="entry name" value="FlbT"/>
    <property type="match status" value="1"/>
</dbReference>
<comment type="function">
    <text evidence="1">Has a post-transcriptional repressor function in flagellum biogenesis. Associates with the 5'-UTR of fljK mRNA and promotes its degradation.</text>
</comment>
<comment type="similarity">
    <text evidence="1">Belongs to the FlbT family.</text>
</comment>
<proteinExistence type="inferred from homology"/>